<sequence>MIVIIPVSPINSLKTRLSEFLSEEERKYLLLNMLKDIKSALINLDTVVVSRDEEILNFAKKELNAKTIKEREKGLNNAIKQAFEEINQEEILIIPADIPLIKKHHIEDIINLSNHYDMIIAPSRGGGTNLLYLKSKNLIDLKYEGFSFLKHLKEAENKNLKYYIYDSFLVSVDINTPEDLGEIFIHGEKTHTKEYLKSLGIYVEPKHSSAGRFVVKRRD</sequence>
<protein>
    <recommendedName>
        <fullName evidence="1">2-phospho-L-lactate guanylyltransferase</fullName>
        <shortName evidence="1">LP guanylyltransferase</shortName>
        <ecNumber evidence="1">2.7.7.68</ecNumber>
    </recommendedName>
</protein>
<gene>
    <name evidence="1" type="primary">cofC</name>
    <name type="ordered locus">Metvu_0088</name>
</gene>
<reference key="1">
    <citation type="submission" date="2009-10" db="EMBL/GenBank/DDBJ databases">
        <title>Complete sequence of chromosome of Methanocaldococcus vulcanius M7.</title>
        <authorList>
            <consortium name="US DOE Joint Genome Institute"/>
            <person name="Lucas S."/>
            <person name="Copeland A."/>
            <person name="Lapidus A."/>
            <person name="Glavina del Rio T."/>
            <person name="Dalin E."/>
            <person name="Tice H."/>
            <person name="Bruce D."/>
            <person name="Goodwin L."/>
            <person name="Pitluck S."/>
            <person name="Lcollab F.I."/>
            <person name="Brettin T."/>
            <person name="Detter J.C."/>
            <person name="Han C."/>
            <person name="Tapia R."/>
            <person name="Kuske C.R."/>
            <person name="Schmutz J."/>
            <person name="Larimer F."/>
            <person name="Land M."/>
            <person name="Hauser L."/>
            <person name="Kyrpides N."/>
            <person name="Ovchinikova G."/>
            <person name="Sieprawska-Lupa M."/>
            <person name="Whitman W.B."/>
            <person name="Woyke T."/>
        </authorList>
    </citation>
    <scope>NUCLEOTIDE SEQUENCE [LARGE SCALE GENOMIC DNA]</scope>
    <source>
        <strain>ATCC 700851 / DSM 12094 / M7</strain>
    </source>
</reference>
<keyword id="KW-0342">GTP-binding</keyword>
<keyword id="KW-0547">Nucleotide-binding</keyword>
<keyword id="KW-0548">Nucleotidyltransferase</keyword>
<keyword id="KW-0808">Transferase</keyword>
<evidence type="ECO:0000255" key="1">
    <source>
        <dbReference type="HAMAP-Rule" id="MF_02114"/>
    </source>
</evidence>
<proteinExistence type="inferred from homology"/>
<feature type="chain" id="PRO_0000398740" description="2-phospho-L-lactate guanylyltransferase">
    <location>
        <begin position="1"/>
        <end position="219"/>
    </location>
</feature>
<dbReference type="EC" id="2.7.7.68" evidence="1"/>
<dbReference type="EMBL" id="CP001787">
    <property type="protein sequence ID" value="ACX71957.1"/>
    <property type="molecule type" value="Genomic_DNA"/>
</dbReference>
<dbReference type="RefSeq" id="WP_012819503.1">
    <property type="nucleotide sequence ID" value="NC_013407.1"/>
</dbReference>
<dbReference type="SMR" id="C9REF5"/>
<dbReference type="STRING" id="579137.Metvu_0088"/>
<dbReference type="GeneID" id="8512414"/>
<dbReference type="KEGG" id="mvu:Metvu_0088"/>
<dbReference type="eggNOG" id="arCOG04472">
    <property type="taxonomic scope" value="Archaea"/>
</dbReference>
<dbReference type="HOGENOM" id="CLU_076569_2_0_2"/>
<dbReference type="OrthoDB" id="11179at2157"/>
<dbReference type="UniPathway" id="UPA00071"/>
<dbReference type="Proteomes" id="UP000002063">
    <property type="component" value="Chromosome"/>
</dbReference>
<dbReference type="GO" id="GO:0005525">
    <property type="term" value="F:GTP binding"/>
    <property type="evidence" value="ECO:0007669"/>
    <property type="project" value="UniProtKB-KW"/>
</dbReference>
<dbReference type="GO" id="GO:0043814">
    <property type="term" value="F:phospholactate guanylyltransferase activity"/>
    <property type="evidence" value="ECO:0007669"/>
    <property type="project" value="UniProtKB-EC"/>
</dbReference>
<dbReference type="GO" id="GO:0052645">
    <property type="term" value="P:F420-0 metabolic process"/>
    <property type="evidence" value="ECO:0007669"/>
    <property type="project" value="UniProtKB-UniRule"/>
</dbReference>
<dbReference type="Gene3D" id="3.90.550.10">
    <property type="entry name" value="Spore Coat Polysaccharide Biosynthesis Protein SpsA, Chain A"/>
    <property type="match status" value="1"/>
</dbReference>
<dbReference type="HAMAP" id="MF_02114">
    <property type="entry name" value="CofC"/>
    <property type="match status" value="1"/>
</dbReference>
<dbReference type="InterPro" id="IPR002835">
    <property type="entry name" value="CofC"/>
</dbReference>
<dbReference type="InterPro" id="IPR029044">
    <property type="entry name" value="Nucleotide-diphossugar_trans"/>
</dbReference>
<dbReference type="NCBIfam" id="TIGR03552">
    <property type="entry name" value="F420_cofC"/>
    <property type="match status" value="1"/>
</dbReference>
<dbReference type="PANTHER" id="PTHR40392">
    <property type="entry name" value="2-PHOSPHO-L-LACTATE GUANYLYLTRANSFERASE"/>
    <property type="match status" value="1"/>
</dbReference>
<dbReference type="PANTHER" id="PTHR40392:SF1">
    <property type="entry name" value="2-PHOSPHO-L-LACTATE GUANYLYLTRANSFERASE"/>
    <property type="match status" value="1"/>
</dbReference>
<dbReference type="Pfam" id="PF01983">
    <property type="entry name" value="CofC"/>
    <property type="match status" value="1"/>
</dbReference>
<dbReference type="SUPFAM" id="SSF53448">
    <property type="entry name" value="Nucleotide-diphospho-sugar transferases"/>
    <property type="match status" value="1"/>
</dbReference>
<name>COFC_METVM</name>
<organism>
    <name type="scientific">Methanocaldococcus vulcanius (strain ATCC 700851 / DSM 12094 / M7)</name>
    <name type="common">Methanococcus vulcanius</name>
    <dbReference type="NCBI Taxonomy" id="579137"/>
    <lineage>
        <taxon>Archaea</taxon>
        <taxon>Methanobacteriati</taxon>
        <taxon>Methanobacteriota</taxon>
        <taxon>Methanomada group</taxon>
        <taxon>Methanococci</taxon>
        <taxon>Methanococcales</taxon>
        <taxon>Methanocaldococcaceae</taxon>
        <taxon>Methanocaldococcus</taxon>
    </lineage>
</organism>
<accession>C9REF5</accession>
<comment type="function">
    <text evidence="1">Guanylyltransferase that catalyzes the activation of (2S)-2-phospholactate (2-PL) as (2S)-lactyl-2-diphospho-5'-guanosine, via the condensation of 2-PL with GTP. It is involved in the biosynthesis of coenzyme F420, a hydride carrier cofactor.</text>
</comment>
<comment type="catalytic activity">
    <reaction evidence="1">
        <text>(2S)-2-phospholactate + GTP + H(+) = (2S)-lactyl-2-diphospho-5'-guanosine + diphosphate</text>
        <dbReference type="Rhea" id="RHEA:63424"/>
        <dbReference type="ChEBI" id="CHEBI:15378"/>
        <dbReference type="ChEBI" id="CHEBI:33019"/>
        <dbReference type="ChEBI" id="CHEBI:37565"/>
        <dbReference type="ChEBI" id="CHEBI:59435"/>
        <dbReference type="ChEBI" id="CHEBI:59906"/>
        <dbReference type="EC" id="2.7.7.68"/>
    </reaction>
</comment>
<comment type="pathway">
    <text evidence="1">Cofactor biosynthesis; coenzyme F420 biosynthesis.</text>
</comment>
<comment type="subunit">
    <text evidence="1">Homodimer.</text>
</comment>
<comment type="similarity">
    <text evidence="1">Belongs to the CofC family.</text>
</comment>